<comment type="interaction">
    <interactant intactId="EBI-8417545">
        <id>Q9LSM5</id>
    </interactant>
    <interactant intactId="EBI-8081141">
        <id>Q0Q0I7</id>
        <label>HSP90-2</label>
    </interactant>
    <organismsDiffer>true</organismsDiffer>
    <experiments>7</experiments>
</comment>
<comment type="similarity">
    <text evidence="3">Belongs to the ECD family.</text>
</comment>
<comment type="sequence caution" evidence="3">
    <conflict type="erroneous initiation">
        <sequence resource="EMBL-CDS" id="AAL87313"/>
    </conflict>
</comment>
<proteinExistence type="evidence at protein level"/>
<name>ECD_ARATH</name>
<gene>
    <name type="ordered locus">At5g65490</name>
    <name type="ORF">K19O4.2</name>
</gene>
<organism>
    <name type="scientific">Arabidopsis thaliana</name>
    <name type="common">Mouse-ear cress</name>
    <dbReference type="NCBI Taxonomy" id="3702"/>
    <lineage>
        <taxon>Eukaryota</taxon>
        <taxon>Viridiplantae</taxon>
        <taxon>Streptophyta</taxon>
        <taxon>Embryophyta</taxon>
        <taxon>Tracheophyta</taxon>
        <taxon>Spermatophyta</taxon>
        <taxon>Magnoliopsida</taxon>
        <taxon>eudicotyledons</taxon>
        <taxon>Gunneridae</taxon>
        <taxon>Pentapetalae</taxon>
        <taxon>rosids</taxon>
        <taxon>malvids</taxon>
        <taxon>Brassicales</taxon>
        <taxon>Brassicaceae</taxon>
        <taxon>Camelineae</taxon>
        <taxon>Arabidopsis</taxon>
    </lineage>
</organism>
<sequence>MSKPSSSPFFSETTSRLQDETVFFSLFPDSSLSSAALQSLHLEIIDFVSPFTSPYIWQHEPFSLSIALSSSCACTNTAIPHLHGKLKYGDNLEDEWFAVFLLFRISAAFPSNSIRVWDTDGEFLLIEAAFHLPRWLNPETSLNRVFIRGGDLHIVPRSRLPDPSLVASLRFLIERGNESRASDSVQSALKNRISDYPERAWRNMHRVRVRVPVSVAQVIRHEPFLISLAVEGFYDRDMDSMKHAAKMEKFLSKGREEKLVLVLVKMSRAMYGQLVQQKFQAPNCYPMPSVSDRDAFSEAELGMKIACGMEMMYQQRKKEGEDGKGISWSKYKDNLEKYGYFEGLLSGSKEYKRLMENAEEYHQKSSSFSRTRDIMSAPVRRIDEILALPYSEDDFKGQEVPASDNDSWLYDGEDELNSVLQERQKEMEFYNSKKERKNKGKEKQEAGSSSDANMNNFDLGDISKSMQQFMHKVSSYKGAEVPENRDFKEVSIDVDRFMKDIESMLGSQGRDEQADDDSDGSEGSSMDMDFDDVEDDSEGEESNEDAKESFEESYYGAMNEELKNSTLEKSFENVNQQHSSKQNEESSKTRDEKDDEFTPVDADFNLVKNLLESYSSQQGLPGPASNLLGLMGLQLPKDSGDKN</sequence>
<dbReference type="EMBL" id="AB026638">
    <property type="protein sequence ID" value="BAA98169.1"/>
    <property type="molecule type" value="Genomic_DNA"/>
</dbReference>
<dbReference type="EMBL" id="CP002688">
    <property type="protein sequence ID" value="AED98062.1"/>
    <property type="molecule type" value="Genomic_DNA"/>
</dbReference>
<dbReference type="EMBL" id="AY080838">
    <property type="protein sequence ID" value="AAL87313.1"/>
    <property type="status" value="ALT_INIT"/>
    <property type="molecule type" value="mRNA"/>
</dbReference>
<dbReference type="RefSeq" id="NP_201352.1">
    <property type="nucleotide sequence ID" value="NM_125947.3"/>
</dbReference>
<dbReference type="FunCoup" id="Q9LSM5">
    <property type="interactions" value="3997"/>
</dbReference>
<dbReference type="IntAct" id="Q9LSM5">
    <property type="interactions" value="2"/>
</dbReference>
<dbReference type="MINT" id="Q9LSM5"/>
<dbReference type="STRING" id="3702.Q9LSM5"/>
<dbReference type="iPTMnet" id="Q9LSM5"/>
<dbReference type="PaxDb" id="3702-AT5G65490.1"/>
<dbReference type="ProteomicsDB" id="222014"/>
<dbReference type="EnsemblPlants" id="AT5G65490.1">
    <property type="protein sequence ID" value="AT5G65490.1"/>
    <property type="gene ID" value="AT5G65490"/>
</dbReference>
<dbReference type="GeneID" id="836674"/>
<dbReference type="Gramene" id="AT5G65490.1">
    <property type="protein sequence ID" value="AT5G65490.1"/>
    <property type="gene ID" value="AT5G65490"/>
</dbReference>
<dbReference type="KEGG" id="ath:AT5G65490"/>
<dbReference type="Araport" id="AT5G65490"/>
<dbReference type="TAIR" id="AT5G65490"/>
<dbReference type="eggNOG" id="KOG2406">
    <property type="taxonomic scope" value="Eukaryota"/>
</dbReference>
<dbReference type="HOGENOM" id="CLU_006241_0_0_1"/>
<dbReference type="InParanoid" id="Q9LSM5"/>
<dbReference type="OMA" id="TKDYIWQ"/>
<dbReference type="PhylomeDB" id="Q9LSM5"/>
<dbReference type="PRO" id="PR:Q9LSM5"/>
<dbReference type="Proteomes" id="UP000006548">
    <property type="component" value="Chromosome 5"/>
</dbReference>
<dbReference type="ExpressionAtlas" id="Q9LSM5">
    <property type="expression patterns" value="baseline and differential"/>
</dbReference>
<dbReference type="InterPro" id="IPR010770">
    <property type="entry name" value="Ecd"/>
</dbReference>
<dbReference type="PANTHER" id="PTHR13060:SF0">
    <property type="entry name" value="PROTEIN ECDYSONELESS HOMOLOG"/>
    <property type="match status" value="1"/>
</dbReference>
<dbReference type="PANTHER" id="PTHR13060">
    <property type="entry name" value="SGT1 PROTEIN HSGT1 SUPPRESSOR OF GCR2"/>
    <property type="match status" value="1"/>
</dbReference>
<dbReference type="Pfam" id="PF07093">
    <property type="entry name" value="SGT1"/>
    <property type="match status" value="1"/>
</dbReference>
<protein>
    <recommendedName>
        <fullName evidence="1">Protein ecdysoneless homolog</fullName>
    </recommendedName>
</protein>
<reference key="1">
    <citation type="submission" date="1999-04" db="EMBL/GenBank/DDBJ databases">
        <title>Structural analysis of Arabidopsis thaliana chromosome 5. XI.</title>
        <authorList>
            <person name="Kaneko T."/>
            <person name="Katoh T."/>
            <person name="Asamizu E."/>
            <person name="Sato S."/>
            <person name="Nakamura Y."/>
            <person name="Kotani H."/>
            <person name="Tabata S."/>
        </authorList>
    </citation>
    <scope>NUCLEOTIDE SEQUENCE [LARGE SCALE GENOMIC DNA]</scope>
    <source>
        <strain>cv. Columbia</strain>
    </source>
</reference>
<reference key="2">
    <citation type="journal article" date="2017" name="Plant J.">
        <title>Araport11: a complete reannotation of the Arabidopsis thaliana reference genome.</title>
        <authorList>
            <person name="Cheng C.Y."/>
            <person name="Krishnakumar V."/>
            <person name="Chan A.P."/>
            <person name="Thibaud-Nissen F."/>
            <person name="Schobel S."/>
            <person name="Town C.D."/>
        </authorList>
    </citation>
    <scope>GENOME REANNOTATION</scope>
    <source>
        <strain>cv. Columbia</strain>
    </source>
</reference>
<reference key="3">
    <citation type="journal article" date="2003" name="Science">
        <title>Empirical analysis of transcriptional activity in the Arabidopsis genome.</title>
        <authorList>
            <person name="Yamada K."/>
            <person name="Lim J."/>
            <person name="Dale J.M."/>
            <person name="Chen H."/>
            <person name="Shinn P."/>
            <person name="Palm C.J."/>
            <person name="Southwick A.M."/>
            <person name="Wu H.C."/>
            <person name="Kim C.J."/>
            <person name="Nguyen M."/>
            <person name="Pham P.K."/>
            <person name="Cheuk R.F."/>
            <person name="Karlin-Newmann G."/>
            <person name="Liu S.X."/>
            <person name="Lam B."/>
            <person name="Sakano H."/>
            <person name="Wu T."/>
            <person name="Yu G."/>
            <person name="Miranda M."/>
            <person name="Quach H.L."/>
            <person name="Tripp M."/>
            <person name="Chang C.H."/>
            <person name="Lee J.M."/>
            <person name="Toriumi M.J."/>
            <person name="Chan M.M."/>
            <person name="Tang C.C."/>
            <person name="Onodera C.S."/>
            <person name="Deng J.M."/>
            <person name="Akiyama K."/>
            <person name="Ansari Y."/>
            <person name="Arakawa T."/>
            <person name="Banh J."/>
            <person name="Banno F."/>
            <person name="Bowser L."/>
            <person name="Brooks S.Y."/>
            <person name="Carninci P."/>
            <person name="Chao Q."/>
            <person name="Choy N."/>
            <person name="Enju A."/>
            <person name="Goldsmith A.D."/>
            <person name="Gurjal M."/>
            <person name="Hansen N.F."/>
            <person name="Hayashizaki Y."/>
            <person name="Johnson-Hopson C."/>
            <person name="Hsuan V.W."/>
            <person name="Iida K."/>
            <person name="Karnes M."/>
            <person name="Khan S."/>
            <person name="Koesema E."/>
            <person name="Ishida J."/>
            <person name="Jiang P.X."/>
            <person name="Jones T."/>
            <person name="Kawai J."/>
            <person name="Kamiya A."/>
            <person name="Meyers C."/>
            <person name="Nakajima M."/>
            <person name="Narusaka M."/>
            <person name="Seki M."/>
            <person name="Sakurai T."/>
            <person name="Satou M."/>
            <person name="Tamse R."/>
            <person name="Vaysberg M."/>
            <person name="Wallender E.K."/>
            <person name="Wong C."/>
            <person name="Yamamura Y."/>
            <person name="Yuan S."/>
            <person name="Shinozaki K."/>
            <person name="Davis R.W."/>
            <person name="Theologis A."/>
            <person name="Ecker J.R."/>
        </authorList>
    </citation>
    <scope>NUCLEOTIDE SEQUENCE [LARGE SCALE MRNA]</scope>
    <source>
        <strain>cv. Columbia</strain>
    </source>
</reference>
<keyword id="KW-1185">Reference proteome</keyword>
<accession>Q9LSM5</accession>
<accession>Q8RXK5</accession>
<evidence type="ECO:0000250" key="1">
    <source>
        <dbReference type="UniProtKB" id="Q9W032"/>
    </source>
</evidence>
<evidence type="ECO:0000256" key="2">
    <source>
        <dbReference type="SAM" id="MobiDB-lite"/>
    </source>
</evidence>
<evidence type="ECO:0000305" key="3"/>
<feature type="chain" id="PRO_0000220847" description="Protein ecdysoneless homolog">
    <location>
        <begin position="1"/>
        <end position="643"/>
    </location>
</feature>
<feature type="region of interest" description="Disordered" evidence="2">
    <location>
        <begin position="428"/>
        <end position="458"/>
    </location>
</feature>
<feature type="region of interest" description="Disordered" evidence="2">
    <location>
        <begin position="501"/>
        <end position="600"/>
    </location>
</feature>
<feature type="compositionally biased region" description="Polar residues" evidence="2">
    <location>
        <begin position="446"/>
        <end position="456"/>
    </location>
</feature>
<feature type="compositionally biased region" description="Acidic residues" evidence="2">
    <location>
        <begin position="528"/>
        <end position="543"/>
    </location>
</feature>
<feature type="compositionally biased region" description="Polar residues" evidence="2">
    <location>
        <begin position="564"/>
        <end position="580"/>
    </location>
</feature>
<feature type="compositionally biased region" description="Basic and acidic residues" evidence="2">
    <location>
        <begin position="581"/>
        <end position="592"/>
    </location>
</feature>